<organism>
    <name type="scientific">Herpetosiphon aurantiacus (strain ATCC 23779 / DSM 785 / 114-95)</name>
    <dbReference type="NCBI Taxonomy" id="316274"/>
    <lineage>
        <taxon>Bacteria</taxon>
        <taxon>Bacillati</taxon>
        <taxon>Chloroflexota</taxon>
        <taxon>Chloroflexia</taxon>
        <taxon>Herpetosiphonales</taxon>
        <taxon>Herpetosiphonaceae</taxon>
        <taxon>Herpetosiphon</taxon>
    </lineage>
</organism>
<evidence type="ECO:0000255" key="1">
    <source>
        <dbReference type="HAMAP-Rule" id="MF_00569"/>
    </source>
</evidence>
<accession>A9B1Q2</accession>
<protein>
    <recommendedName>
        <fullName evidence="1">Quinolinate synthase</fullName>
        <ecNumber evidence="1">2.5.1.72</ecNumber>
    </recommendedName>
</protein>
<reference key="1">
    <citation type="journal article" date="2011" name="Stand. Genomic Sci.">
        <title>Complete genome sequence of the filamentous gliding predatory bacterium Herpetosiphon aurantiacus type strain (114-95(T)).</title>
        <authorList>
            <person name="Kiss H."/>
            <person name="Nett M."/>
            <person name="Domin N."/>
            <person name="Martin K."/>
            <person name="Maresca J.A."/>
            <person name="Copeland A."/>
            <person name="Lapidus A."/>
            <person name="Lucas S."/>
            <person name="Berry K.W."/>
            <person name="Glavina Del Rio T."/>
            <person name="Dalin E."/>
            <person name="Tice H."/>
            <person name="Pitluck S."/>
            <person name="Richardson P."/>
            <person name="Bruce D."/>
            <person name="Goodwin L."/>
            <person name="Han C."/>
            <person name="Detter J.C."/>
            <person name="Schmutz J."/>
            <person name="Brettin T."/>
            <person name="Land M."/>
            <person name="Hauser L."/>
            <person name="Kyrpides N.C."/>
            <person name="Ivanova N."/>
            <person name="Goeker M."/>
            <person name="Woyke T."/>
            <person name="Klenk H.P."/>
            <person name="Bryant D.A."/>
        </authorList>
    </citation>
    <scope>NUCLEOTIDE SEQUENCE [LARGE SCALE GENOMIC DNA]</scope>
    <source>
        <strain>ATCC 23779 / DSM 785 / 114-95</strain>
    </source>
</reference>
<gene>
    <name evidence="1" type="primary">nadA</name>
    <name type="ordered locus">Haur_1289</name>
</gene>
<sequence>MTVIAAEAIGVAHERAEDYAGLSIEELDQRIATAKAKLGERLVILGHHYQRDDVVKHADLSGDSYGLSVDARKTAAEYIVFCGVHFMAESADILGRDDQTVILPDHTAGCSMADMADIEQLEEVWDELDEILGDAEAQVMPITYVNSSAAVKAFVGEHGGACCTSSNAEPIVRWAKNLRPKMLFLPDQHLGRYTAFAKLGIPLDKMLVWNPNLRYGGHTPEAIREAEVLLWAGHCSVHAQFRPAYIKAWREKHPEINVIVHPECTLGVTNEADYVGSTAYIIKTINEAPAGSMWAVGTEINLVNRLQTNNPDKTIVSVSPFACLCSTMYRIDPEELCWVLENLVEGNVVNQIAVPTAIKQKARLALERMLEIAGN</sequence>
<keyword id="KW-0004">4Fe-4S</keyword>
<keyword id="KW-0963">Cytoplasm</keyword>
<keyword id="KW-0408">Iron</keyword>
<keyword id="KW-0411">Iron-sulfur</keyword>
<keyword id="KW-0479">Metal-binding</keyword>
<keyword id="KW-0662">Pyridine nucleotide biosynthesis</keyword>
<keyword id="KW-0808">Transferase</keyword>
<dbReference type="EC" id="2.5.1.72" evidence="1"/>
<dbReference type="EMBL" id="CP000875">
    <property type="protein sequence ID" value="ABX03937.1"/>
    <property type="molecule type" value="Genomic_DNA"/>
</dbReference>
<dbReference type="SMR" id="A9B1Q2"/>
<dbReference type="FunCoup" id="A9B1Q2">
    <property type="interactions" value="311"/>
</dbReference>
<dbReference type="STRING" id="316274.Haur_1289"/>
<dbReference type="KEGG" id="hau:Haur_1289"/>
<dbReference type="eggNOG" id="COG0379">
    <property type="taxonomic scope" value="Bacteria"/>
</dbReference>
<dbReference type="HOGENOM" id="CLU_047382_2_0_0"/>
<dbReference type="InParanoid" id="A9B1Q2"/>
<dbReference type="UniPathway" id="UPA00253">
    <property type="reaction ID" value="UER00327"/>
</dbReference>
<dbReference type="Proteomes" id="UP000000787">
    <property type="component" value="Chromosome"/>
</dbReference>
<dbReference type="GO" id="GO:0005829">
    <property type="term" value="C:cytosol"/>
    <property type="evidence" value="ECO:0007669"/>
    <property type="project" value="TreeGrafter"/>
</dbReference>
<dbReference type="GO" id="GO:0051539">
    <property type="term" value="F:4 iron, 4 sulfur cluster binding"/>
    <property type="evidence" value="ECO:0007669"/>
    <property type="project" value="UniProtKB-KW"/>
</dbReference>
<dbReference type="GO" id="GO:0046872">
    <property type="term" value="F:metal ion binding"/>
    <property type="evidence" value="ECO:0007669"/>
    <property type="project" value="UniProtKB-KW"/>
</dbReference>
<dbReference type="GO" id="GO:0008987">
    <property type="term" value="F:quinolinate synthetase A activity"/>
    <property type="evidence" value="ECO:0007669"/>
    <property type="project" value="UniProtKB-UniRule"/>
</dbReference>
<dbReference type="GO" id="GO:0034628">
    <property type="term" value="P:'de novo' NAD biosynthetic process from L-aspartate"/>
    <property type="evidence" value="ECO:0007669"/>
    <property type="project" value="TreeGrafter"/>
</dbReference>
<dbReference type="FunFam" id="3.40.50.10800:FF:000001">
    <property type="entry name" value="Quinolinate synthase A"/>
    <property type="match status" value="1"/>
</dbReference>
<dbReference type="Gene3D" id="3.40.50.10800">
    <property type="entry name" value="NadA-like"/>
    <property type="match status" value="3"/>
</dbReference>
<dbReference type="HAMAP" id="MF_00569">
    <property type="entry name" value="NadA_type3"/>
    <property type="match status" value="1"/>
</dbReference>
<dbReference type="InterPro" id="IPR003473">
    <property type="entry name" value="NadA"/>
</dbReference>
<dbReference type="InterPro" id="IPR036094">
    <property type="entry name" value="NadA_sf"/>
</dbReference>
<dbReference type="InterPro" id="IPR023515">
    <property type="entry name" value="Quinolinate_synth_A_type3"/>
</dbReference>
<dbReference type="NCBIfam" id="TIGR00550">
    <property type="entry name" value="nadA"/>
    <property type="match status" value="1"/>
</dbReference>
<dbReference type="NCBIfam" id="NF006883">
    <property type="entry name" value="PRK09375.2-4"/>
    <property type="match status" value="1"/>
</dbReference>
<dbReference type="PANTHER" id="PTHR30573:SF0">
    <property type="entry name" value="QUINOLINATE SYNTHASE, CHLOROPLASTIC"/>
    <property type="match status" value="1"/>
</dbReference>
<dbReference type="PANTHER" id="PTHR30573">
    <property type="entry name" value="QUINOLINATE SYNTHETASE A"/>
    <property type="match status" value="1"/>
</dbReference>
<dbReference type="Pfam" id="PF02445">
    <property type="entry name" value="NadA"/>
    <property type="match status" value="1"/>
</dbReference>
<dbReference type="SUPFAM" id="SSF142754">
    <property type="entry name" value="NadA-like"/>
    <property type="match status" value="1"/>
</dbReference>
<feature type="chain" id="PRO_1000212080" description="Quinolinate synthase">
    <location>
        <begin position="1"/>
        <end position="375"/>
    </location>
</feature>
<feature type="binding site" evidence="1">
    <location>
        <position position="47"/>
    </location>
    <ligand>
        <name>iminosuccinate</name>
        <dbReference type="ChEBI" id="CHEBI:77875"/>
    </ligand>
</feature>
<feature type="binding site" evidence="1">
    <location>
        <position position="64"/>
    </location>
    <ligand>
        <name>iminosuccinate</name>
        <dbReference type="ChEBI" id="CHEBI:77875"/>
    </ligand>
</feature>
<feature type="binding site" evidence="1">
    <location>
        <position position="110"/>
    </location>
    <ligand>
        <name>[4Fe-4S] cluster</name>
        <dbReference type="ChEBI" id="CHEBI:49883"/>
    </ligand>
</feature>
<feature type="binding site" evidence="1">
    <location>
        <begin position="144"/>
        <end position="146"/>
    </location>
    <ligand>
        <name>iminosuccinate</name>
        <dbReference type="ChEBI" id="CHEBI:77875"/>
    </ligand>
</feature>
<feature type="binding site" evidence="1">
    <location>
        <position position="165"/>
    </location>
    <ligand>
        <name>iminosuccinate</name>
        <dbReference type="ChEBI" id="CHEBI:77875"/>
    </ligand>
</feature>
<feature type="binding site" evidence="1">
    <location>
        <position position="235"/>
    </location>
    <ligand>
        <name>[4Fe-4S] cluster</name>
        <dbReference type="ChEBI" id="CHEBI:49883"/>
    </ligand>
</feature>
<feature type="binding site" evidence="1">
    <location>
        <begin position="261"/>
        <end position="263"/>
    </location>
    <ligand>
        <name>iminosuccinate</name>
        <dbReference type="ChEBI" id="CHEBI:77875"/>
    </ligand>
</feature>
<feature type="binding site" evidence="1">
    <location>
        <position position="278"/>
    </location>
    <ligand>
        <name>iminosuccinate</name>
        <dbReference type="ChEBI" id="CHEBI:77875"/>
    </ligand>
</feature>
<feature type="binding site" evidence="1">
    <location>
        <position position="325"/>
    </location>
    <ligand>
        <name>[4Fe-4S] cluster</name>
        <dbReference type="ChEBI" id="CHEBI:49883"/>
    </ligand>
</feature>
<proteinExistence type="inferred from homology"/>
<comment type="function">
    <text evidence="1">Catalyzes the condensation of iminoaspartate with dihydroxyacetone phosphate to form quinolinate.</text>
</comment>
<comment type="catalytic activity">
    <reaction evidence="1">
        <text>iminosuccinate + dihydroxyacetone phosphate = quinolinate + phosphate + 2 H2O + H(+)</text>
        <dbReference type="Rhea" id="RHEA:25888"/>
        <dbReference type="ChEBI" id="CHEBI:15377"/>
        <dbReference type="ChEBI" id="CHEBI:15378"/>
        <dbReference type="ChEBI" id="CHEBI:29959"/>
        <dbReference type="ChEBI" id="CHEBI:43474"/>
        <dbReference type="ChEBI" id="CHEBI:57642"/>
        <dbReference type="ChEBI" id="CHEBI:77875"/>
        <dbReference type="EC" id="2.5.1.72"/>
    </reaction>
    <physiologicalReaction direction="left-to-right" evidence="1">
        <dbReference type="Rhea" id="RHEA:25889"/>
    </physiologicalReaction>
</comment>
<comment type="cofactor">
    <cofactor evidence="1">
        <name>[4Fe-4S] cluster</name>
        <dbReference type="ChEBI" id="CHEBI:49883"/>
    </cofactor>
    <text evidence="1">Binds 1 [4Fe-4S] cluster per subunit.</text>
</comment>
<comment type="pathway">
    <text evidence="1">Cofactor biosynthesis; NAD(+) biosynthesis; quinolinate from iminoaspartate: step 1/1.</text>
</comment>
<comment type="subcellular location">
    <subcellularLocation>
        <location evidence="1">Cytoplasm</location>
    </subcellularLocation>
</comment>
<comment type="similarity">
    <text evidence="1">Belongs to the quinolinate synthase family. Type 3 subfamily.</text>
</comment>
<name>NADA_HERA2</name>